<name>ARGP_CROS8</name>
<comment type="function">
    <text evidence="1">Controls the transcription of genes involved in arginine and lysine metabolism.</text>
</comment>
<comment type="subunit">
    <text evidence="1">Homodimer.</text>
</comment>
<comment type="similarity">
    <text evidence="2">Belongs to the LysR transcriptional regulatory family.</text>
</comment>
<feature type="chain" id="PRO_1000060878" description="HTH-type transcriptional regulator ArgP">
    <location>
        <begin position="1"/>
        <end position="297"/>
    </location>
</feature>
<feature type="domain" description="HTH lysR-type" evidence="1">
    <location>
        <begin position="4"/>
        <end position="60"/>
    </location>
</feature>
<feature type="DNA-binding region" description="H-T-H motif" evidence="1">
    <location>
        <begin position="21"/>
        <end position="40"/>
    </location>
</feature>
<accession>A7MR91</accession>
<evidence type="ECO:0000255" key="1">
    <source>
        <dbReference type="HAMAP-Rule" id="MF_00513"/>
    </source>
</evidence>
<evidence type="ECO:0000305" key="2"/>
<organism>
    <name type="scientific">Cronobacter sakazakii (strain ATCC BAA-894)</name>
    <name type="common">Enterobacter sakazakii</name>
    <dbReference type="NCBI Taxonomy" id="290339"/>
    <lineage>
        <taxon>Bacteria</taxon>
        <taxon>Pseudomonadati</taxon>
        <taxon>Pseudomonadota</taxon>
        <taxon>Gammaproteobacteria</taxon>
        <taxon>Enterobacterales</taxon>
        <taxon>Enterobacteriaceae</taxon>
        <taxon>Cronobacter</taxon>
    </lineage>
</organism>
<dbReference type="EMBL" id="CP000783">
    <property type="protein sequence ID" value="ABU75712.1"/>
    <property type="molecule type" value="Genomic_DNA"/>
</dbReference>
<dbReference type="RefSeq" id="WP_004385653.1">
    <property type="nucleotide sequence ID" value="NC_009778.1"/>
</dbReference>
<dbReference type="SMR" id="A7MR91"/>
<dbReference type="GeneID" id="56733371"/>
<dbReference type="KEGG" id="esa:ESA_00414"/>
<dbReference type="HOGENOM" id="CLU_063829_0_0_6"/>
<dbReference type="Proteomes" id="UP000000260">
    <property type="component" value="Chromosome"/>
</dbReference>
<dbReference type="GO" id="GO:0003677">
    <property type="term" value="F:DNA binding"/>
    <property type="evidence" value="ECO:0007669"/>
    <property type="project" value="UniProtKB-UniRule"/>
</dbReference>
<dbReference type="GO" id="GO:0003700">
    <property type="term" value="F:DNA-binding transcription factor activity"/>
    <property type="evidence" value="ECO:0007669"/>
    <property type="project" value="UniProtKB-UniRule"/>
</dbReference>
<dbReference type="CDD" id="cd08428">
    <property type="entry name" value="PBP2_IciA_ArgP"/>
    <property type="match status" value="1"/>
</dbReference>
<dbReference type="FunFam" id="1.10.10.10:FF:000061">
    <property type="entry name" value="HTH-type transcriptional regulator ArgP"/>
    <property type="match status" value="1"/>
</dbReference>
<dbReference type="FunFam" id="3.40.190.290:FF:000002">
    <property type="entry name" value="HTH-type transcriptional regulator ArgP"/>
    <property type="match status" value="1"/>
</dbReference>
<dbReference type="Gene3D" id="3.40.190.290">
    <property type="match status" value="1"/>
</dbReference>
<dbReference type="Gene3D" id="1.10.10.10">
    <property type="entry name" value="Winged helix-like DNA-binding domain superfamily/Winged helix DNA-binding domain"/>
    <property type="match status" value="1"/>
</dbReference>
<dbReference type="HAMAP" id="MF_00513">
    <property type="entry name" value="HTH_type_ArgP"/>
    <property type="match status" value="1"/>
</dbReference>
<dbReference type="InterPro" id="IPR017685">
    <property type="entry name" value="ArgP"/>
</dbReference>
<dbReference type="InterPro" id="IPR023490">
    <property type="entry name" value="ArgP_gammaproteobact"/>
</dbReference>
<dbReference type="InterPro" id="IPR050176">
    <property type="entry name" value="LTTR"/>
</dbReference>
<dbReference type="InterPro" id="IPR005119">
    <property type="entry name" value="LysR_subst-bd"/>
</dbReference>
<dbReference type="InterPro" id="IPR000847">
    <property type="entry name" value="Tscrpt_reg_HTH_LysR"/>
</dbReference>
<dbReference type="InterPro" id="IPR036388">
    <property type="entry name" value="WH-like_DNA-bd_sf"/>
</dbReference>
<dbReference type="InterPro" id="IPR036390">
    <property type="entry name" value="WH_DNA-bd_sf"/>
</dbReference>
<dbReference type="NCBIfam" id="TIGR03298">
    <property type="entry name" value="argP"/>
    <property type="match status" value="1"/>
</dbReference>
<dbReference type="NCBIfam" id="NF002964">
    <property type="entry name" value="PRK03635.1"/>
    <property type="match status" value="1"/>
</dbReference>
<dbReference type="NCBIfam" id="NF009888">
    <property type="entry name" value="PRK13348.1"/>
    <property type="match status" value="1"/>
</dbReference>
<dbReference type="PANTHER" id="PTHR30579:SF2">
    <property type="entry name" value="HTH-TYPE TRANSCRIPTIONAL REGULATOR ARGP"/>
    <property type="match status" value="1"/>
</dbReference>
<dbReference type="PANTHER" id="PTHR30579">
    <property type="entry name" value="TRANSCRIPTIONAL REGULATOR"/>
    <property type="match status" value="1"/>
</dbReference>
<dbReference type="Pfam" id="PF00126">
    <property type="entry name" value="HTH_1"/>
    <property type="match status" value="1"/>
</dbReference>
<dbReference type="Pfam" id="PF03466">
    <property type="entry name" value="LysR_substrate"/>
    <property type="match status" value="1"/>
</dbReference>
<dbReference type="PRINTS" id="PR00039">
    <property type="entry name" value="HTHLYSR"/>
</dbReference>
<dbReference type="SUPFAM" id="SSF53850">
    <property type="entry name" value="Periplasmic binding protein-like II"/>
    <property type="match status" value="1"/>
</dbReference>
<dbReference type="SUPFAM" id="SSF46785">
    <property type="entry name" value="Winged helix' DNA-binding domain"/>
    <property type="match status" value="1"/>
</dbReference>
<dbReference type="PROSITE" id="PS50931">
    <property type="entry name" value="HTH_LYSR"/>
    <property type="match status" value="1"/>
</dbReference>
<keyword id="KW-0238">DNA-binding</keyword>
<keyword id="KW-1185">Reference proteome</keyword>
<keyword id="KW-0804">Transcription</keyword>
<keyword id="KW-0805">Transcription regulation</keyword>
<sequence>MKRPDYRTLQALDAVIRERGFERAAQKLCITQSAVSQRIKQLENTFGQPLLVRTVPPRPTEQGQKLLALLRQVELLEEEWLGDEQTGSTPLLLSLAVNADSLATWLLPALAPVLADSPVRLNLQVEDETRTQERLRRGEVVGAVSIQPQALPSCLVDQLGALDYLFVASKPFADRYFPNGVTRASLLKAPAVAFDHLDDMHQAFLQQNFDLPPGSVPCHIVNSSEAFVQLARQGTTCCMIPHLQIEKELQSGELIDLTPGLYQRRMLFWHRFAPESRMMRKVTDALLEYGHKVLRQD</sequence>
<reference key="1">
    <citation type="journal article" date="2010" name="PLoS ONE">
        <title>Genome sequence of Cronobacter sakazakii BAA-894 and comparative genomic hybridization analysis with other Cronobacter species.</title>
        <authorList>
            <person name="Kucerova E."/>
            <person name="Clifton S.W."/>
            <person name="Xia X.Q."/>
            <person name="Long F."/>
            <person name="Porwollik S."/>
            <person name="Fulton L."/>
            <person name="Fronick C."/>
            <person name="Minx P."/>
            <person name="Kyung K."/>
            <person name="Warren W."/>
            <person name="Fulton R."/>
            <person name="Feng D."/>
            <person name="Wollam A."/>
            <person name="Shah N."/>
            <person name="Bhonagiri V."/>
            <person name="Nash W.E."/>
            <person name="Hallsworth-Pepin K."/>
            <person name="Wilson R.K."/>
            <person name="McClelland M."/>
            <person name="Forsythe S.J."/>
        </authorList>
    </citation>
    <scope>NUCLEOTIDE SEQUENCE [LARGE SCALE GENOMIC DNA]</scope>
    <source>
        <strain>ATCC BAA-894</strain>
    </source>
</reference>
<gene>
    <name evidence="1" type="primary">argP</name>
    <name type="synonym">iciA</name>
    <name type="ordered locus">ESA_00414</name>
</gene>
<proteinExistence type="inferred from homology"/>
<protein>
    <recommendedName>
        <fullName evidence="1">HTH-type transcriptional regulator ArgP</fullName>
    </recommendedName>
</protein>